<organism>
    <name type="scientific">Legionella pneumophila (strain Paris)</name>
    <dbReference type="NCBI Taxonomy" id="297246"/>
    <lineage>
        <taxon>Bacteria</taxon>
        <taxon>Pseudomonadati</taxon>
        <taxon>Pseudomonadota</taxon>
        <taxon>Gammaproteobacteria</taxon>
        <taxon>Legionellales</taxon>
        <taxon>Legionellaceae</taxon>
        <taxon>Legionella</taxon>
    </lineage>
</organism>
<evidence type="ECO:0000255" key="1">
    <source>
        <dbReference type="HAMAP-Rule" id="MF_00361"/>
    </source>
</evidence>
<keyword id="KW-0067">ATP-binding</keyword>
<keyword id="KW-0963">Cytoplasm</keyword>
<keyword id="KW-0418">Kinase</keyword>
<keyword id="KW-0520">NAD</keyword>
<keyword id="KW-0521">NADP</keyword>
<keyword id="KW-0547">Nucleotide-binding</keyword>
<keyword id="KW-0808">Transferase</keyword>
<proteinExistence type="inferred from homology"/>
<gene>
    <name evidence="1" type="primary">nadK</name>
    <name type="ordered locus">lpp2876</name>
</gene>
<dbReference type="EC" id="2.7.1.23" evidence="1"/>
<dbReference type="EMBL" id="CR628336">
    <property type="protein sequence ID" value="CAH14029.1"/>
    <property type="molecule type" value="Genomic_DNA"/>
</dbReference>
<dbReference type="RefSeq" id="WP_010948510.1">
    <property type="nucleotide sequence ID" value="NC_006368.1"/>
</dbReference>
<dbReference type="SMR" id="Q5X168"/>
<dbReference type="KEGG" id="lpp:lpp2876"/>
<dbReference type="LegioList" id="lpp2876"/>
<dbReference type="HOGENOM" id="CLU_008831_0_1_6"/>
<dbReference type="GO" id="GO:0005737">
    <property type="term" value="C:cytoplasm"/>
    <property type="evidence" value="ECO:0007669"/>
    <property type="project" value="UniProtKB-SubCell"/>
</dbReference>
<dbReference type="GO" id="GO:0005524">
    <property type="term" value="F:ATP binding"/>
    <property type="evidence" value="ECO:0007669"/>
    <property type="project" value="UniProtKB-KW"/>
</dbReference>
<dbReference type="GO" id="GO:0046872">
    <property type="term" value="F:metal ion binding"/>
    <property type="evidence" value="ECO:0007669"/>
    <property type="project" value="UniProtKB-UniRule"/>
</dbReference>
<dbReference type="GO" id="GO:0051287">
    <property type="term" value="F:NAD binding"/>
    <property type="evidence" value="ECO:0007669"/>
    <property type="project" value="UniProtKB-ARBA"/>
</dbReference>
<dbReference type="GO" id="GO:0003951">
    <property type="term" value="F:NAD+ kinase activity"/>
    <property type="evidence" value="ECO:0007669"/>
    <property type="project" value="UniProtKB-UniRule"/>
</dbReference>
<dbReference type="GO" id="GO:0019674">
    <property type="term" value="P:NAD metabolic process"/>
    <property type="evidence" value="ECO:0007669"/>
    <property type="project" value="InterPro"/>
</dbReference>
<dbReference type="GO" id="GO:0006741">
    <property type="term" value="P:NADP biosynthetic process"/>
    <property type="evidence" value="ECO:0007669"/>
    <property type="project" value="UniProtKB-UniRule"/>
</dbReference>
<dbReference type="FunFam" id="2.60.200.30:FF:000009">
    <property type="entry name" value="Poly(P)/ATP NAD kinase"/>
    <property type="match status" value="1"/>
</dbReference>
<dbReference type="Gene3D" id="3.40.50.10330">
    <property type="entry name" value="Probable inorganic polyphosphate/atp-NAD kinase, domain 1"/>
    <property type="match status" value="1"/>
</dbReference>
<dbReference type="Gene3D" id="2.60.200.30">
    <property type="entry name" value="Probable inorganic polyphosphate/atp-NAD kinase, domain 2"/>
    <property type="match status" value="1"/>
</dbReference>
<dbReference type="HAMAP" id="MF_00361">
    <property type="entry name" value="NAD_kinase"/>
    <property type="match status" value="1"/>
</dbReference>
<dbReference type="InterPro" id="IPR017438">
    <property type="entry name" value="ATP-NAD_kinase_N"/>
</dbReference>
<dbReference type="InterPro" id="IPR017437">
    <property type="entry name" value="ATP-NAD_kinase_PpnK-typ_C"/>
</dbReference>
<dbReference type="InterPro" id="IPR016064">
    <property type="entry name" value="NAD/diacylglycerol_kinase_sf"/>
</dbReference>
<dbReference type="InterPro" id="IPR002504">
    <property type="entry name" value="NADK"/>
</dbReference>
<dbReference type="NCBIfam" id="NF002306">
    <property type="entry name" value="PRK01231.1"/>
    <property type="match status" value="1"/>
</dbReference>
<dbReference type="PANTHER" id="PTHR20275">
    <property type="entry name" value="NAD KINASE"/>
    <property type="match status" value="1"/>
</dbReference>
<dbReference type="PANTHER" id="PTHR20275:SF0">
    <property type="entry name" value="NAD KINASE"/>
    <property type="match status" value="1"/>
</dbReference>
<dbReference type="Pfam" id="PF01513">
    <property type="entry name" value="NAD_kinase"/>
    <property type="match status" value="1"/>
</dbReference>
<dbReference type="Pfam" id="PF20143">
    <property type="entry name" value="NAD_kinase_C"/>
    <property type="match status" value="1"/>
</dbReference>
<dbReference type="SUPFAM" id="SSF111331">
    <property type="entry name" value="NAD kinase/diacylglycerol kinase-like"/>
    <property type="match status" value="1"/>
</dbReference>
<sequence>MKQKFKRAILYARQHRANQEVNESLHRLVDFLSTQDIEIFQDSDTAASFELKAPVLPREKMGAKHDLIIVVGGDGSLLSASRMAIKVNTPVIGINRGRLGFLTDILPQDIESHLGPVLNGQYNEEERFLLHTKIYDKENSYFEGDALNDVVLGRGSETHLIEFDVYINQQLVSHYRSDGMILSTPTGSTAYALSAGGPIMHPQLNAIVLVPMFSHSLSSRPLVIDGEAEIELYISKSNETDLRISCDGHESRVVKPGQKVAVKKNGNRLRLLHPLDYHYYDTLRSKLGWESKHQG</sequence>
<name>NADK_LEGPA</name>
<feature type="chain" id="PRO_0000229650" description="NAD kinase">
    <location>
        <begin position="1"/>
        <end position="295"/>
    </location>
</feature>
<feature type="active site" description="Proton acceptor" evidence="1">
    <location>
        <position position="74"/>
    </location>
</feature>
<feature type="binding site" evidence="1">
    <location>
        <begin position="74"/>
        <end position="75"/>
    </location>
    <ligand>
        <name>NAD(+)</name>
        <dbReference type="ChEBI" id="CHEBI:57540"/>
    </ligand>
</feature>
<feature type="binding site" evidence="1">
    <location>
        <begin position="148"/>
        <end position="149"/>
    </location>
    <ligand>
        <name>NAD(+)</name>
        <dbReference type="ChEBI" id="CHEBI:57540"/>
    </ligand>
</feature>
<feature type="binding site" evidence="1">
    <location>
        <position position="159"/>
    </location>
    <ligand>
        <name>NAD(+)</name>
        <dbReference type="ChEBI" id="CHEBI:57540"/>
    </ligand>
</feature>
<feature type="binding site" evidence="1">
    <location>
        <position position="176"/>
    </location>
    <ligand>
        <name>NAD(+)</name>
        <dbReference type="ChEBI" id="CHEBI:57540"/>
    </ligand>
</feature>
<feature type="binding site" evidence="1">
    <location>
        <position position="178"/>
    </location>
    <ligand>
        <name>NAD(+)</name>
        <dbReference type="ChEBI" id="CHEBI:57540"/>
    </ligand>
</feature>
<feature type="binding site" evidence="1">
    <location>
        <begin position="189"/>
        <end position="194"/>
    </location>
    <ligand>
        <name>NAD(+)</name>
        <dbReference type="ChEBI" id="CHEBI:57540"/>
    </ligand>
</feature>
<accession>Q5X168</accession>
<reference key="1">
    <citation type="journal article" date="2004" name="Nat. Genet.">
        <title>Evidence in the Legionella pneumophila genome for exploitation of host cell functions and high genome plasticity.</title>
        <authorList>
            <person name="Cazalet C."/>
            <person name="Rusniok C."/>
            <person name="Brueggemann H."/>
            <person name="Zidane N."/>
            <person name="Magnier A."/>
            <person name="Ma L."/>
            <person name="Tichit M."/>
            <person name="Jarraud S."/>
            <person name="Bouchier C."/>
            <person name="Vandenesch F."/>
            <person name="Kunst F."/>
            <person name="Etienne J."/>
            <person name="Glaser P."/>
            <person name="Buchrieser C."/>
        </authorList>
    </citation>
    <scope>NUCLEOTIDE SEQUENCE [LARGE SCALE GENOMIC DNA]</scope>
    <source>
        <strain>Paris</strain>
    </source>
</reference>
<protein>
    <recommendedName>
        <fullName evidence="1">NAD kinase</fullName>
        <ecNumber evidence="1">2.7.1.23</ecNumber>
    </recommendedName>
    <alternativeName>
        <fullName evidence="1">ATP-dependent NAD kinase</fullName>
    </alternativeName>
</protein>
<comment type="function">
    <text evidence="1">Involved in the regulation of the intracellular balance of NAD and NADP, and is a key enzyme in the biosynthesis of NADP. Catalyzes specifically the phosphorylation on 2'-hydroxyl of the adenosine moiety of NAD to yield NADP.</text>
</comment>
<comment type="catalytic activity">
    <reaction evidence="1">
        <text>NAD(+) + ATP = ADP + NADP(+) + H(+)</text>
        <dbReference type="Rhea" id="RHEA:18629"/>
        <dbReference type="ChEBI" id="CHEBI:15378"/>
        <dbReference type="ChEBI" id="CHEBI:30616"/>
        <dbReference type="ChEBI" id="CHEBI:57540"/>
        <dbReference type="ChEBI" id="CHEBI:58349"/>
        <dbReference type="ChEBI" id="CHEBI:456216"/>
        <dbReference type="EC" id="2.7.1.23"/>
    </reaction>
</comment>
<comment type="cofactor">
    <cofactor evidence="1">
        <name>a divalent metal cation</name>
        <dbReference type="ChEBI" id="CHEBI:60240"/>
    </cofactor>
</comment>
<comment type="subcellular location">
    <subcellularLocation>
        <location evidence="1">Cytoplasm</location>
    </subcellularLocation>
</comment>
<comment type="similarity">
    <text evidence="1">Belongs to the NAD kinase family.</text>
</comment>